<protein>
    <recommendedName>
        <fullName evidence="1">Arginine biosynthesis bifunctional protein ArgJ</fullName>
    </recommendedName>
    <domain>
        <recommendedName>
            <fullName evidence="1">Glutamate N-acetyltransferase</fullName>
            <ecNumber evidence="1">2.3.1.35</ecNumber>
        </recommendedName>
        <alternativeName>
            <fullName evidence="1">Ornithine acetyltransferase</fullName>
            <shortName evidence="1">OATase</shortName>
        </alternativeName>
        <alternativeName>
            <fullName evidence="1">Ornithine transacetylase</fullName>
        </alternativeName>
    </domain>
    <domain>
        <recommendedName>
            <fullName evidence="1">Amino-acid acetyltransferase</fullName>
            <ecNumber evidence="1">2.3.1.1</ecNumber>
        </recommendedName>
        <alternativeName>
            <fullName evidence="1">N-acetylglutamate synthase</fullName>
            <shortName evidence="1">AGSase</shortName>
        </alternativeName>
    </domain>
    <component>
        <recommendedName>
            <fullName evidence="1">Arginine biosynthesis bifunctional protein ArgJ alpha chain</fullName>
        </recommendedName>
    </component>
    <component>
        <recommendedName>
            <fullName evidence="1">Arginine biosynthesis bifunctional protein ArgJ beta chain</fullName>
        </recommendedName>
    </component>
</protein>
<reference key="1">
    <citation type="journal article" date="2006" name="J. Bacteriol.">
        <title>The genome sequence of the obligately chemolithoautotrophic, facultatively anaerobic bacterium Thiobacillus denitrificans.</title>
        <authorList>
            <person name="Beller H.R."/>
            <person name="Chain P.S."/>
            <person name="Letain T.E."/>
            <person name="Chakicherla A."/>
            <person name="Larimer F.W."/>
            <person name="Richardson P.M."/>
            <person name="Coleman M.A."/>
            <person name="Wood A.P."/>
            <person name="Kelly D.P."/>
        </authorList>
    </citation>
    <scope>NUCLEOTIDE SEQUENCE [LARGE SCALE GENOMIC DNA]</scope>
    <source>
        <strain>ATCC 25259 / T1</strain>
    </source>
</reference>
<sequence length="407" mass="42182">MPVNLVAPDPASLLPVPGVRLGIASAGIKKAGRRDLTLIELAPGSRVAGVFTQNRFCAAPVTVCREHLTRGDVRALVINTGNANAGTGDEGLDRARRTCSAVADLFAVDATQVLPFSTGVILEPLPIDKILPALPAAHADLAAGHWSEAAAAIMTTDIVAKGASRQLQIDGRTITVTGIAKGSGMIHPNMATMLGFVATDAAIAPALMQRMVRDVADVSFNCVTVDGDTSTNDSFILIATGQAGNAEIADAGTDYSALKAALADVAIELAQAMARDGEGATKFMTIAVEGGRDRAECKQIAYAIARSPLVKTAFFASDPNLGRILAAIGYAGVQDLDVNALKVWLGDVLVAEAGGRAAGYSEAAAAAVMKAAEITVRVSLARGDARATVWTCDFSYDYVKINAEYRT</sequence>
<evidence type="ECO:0000255" key="1">
    <source>
        <dbReference type="HAMAP-Rule" id="MF_01106"/>
    </source>
</evidence>
<comment type="function">
    <text evidence="1">Catalyzes two activities which are involved in the cyclic version of arginine biosynthesis: the synthesis of N-acetylglutamate from glutamate and acetyl-CoA as the acetyl donor, and of ornithine by transacetylation between N(2)-acetylornithine and glutamate.</text>
</comment>
<comment type="catalytic activity">
    <reaction evidence="1">
        <text>N(2)-acetyl-L-ornithine + L-glutamate = N-acetyl-L-glutamate + L-ornithine</text>
        <dbReference type="Rhea" id="RHEA:15349"/>
        <dbReference type="ChEBI" id="CHEBI:29985"/>
        <dbReference type="ChEBI" id="CHEBI:44337"/>
        <dbReference type="ChEBI" id="CHEBI:46911"/>
        <dbReference type="ChEBI" id="CHEBI:57805"/>
        <dbReference type="EC" id="2.3.1.35"/>
    </reaction>
</comment>
<comment type="catalytic activity">
    <reaction evidence="1">
        <text>L-glutamate + acetyl-CoA = N-acetyl-L-glutamate + CoA + H(+)</text>
        <dbReference type="Rhea" id="RHEA:24292"/>
        <dbReference type="ChEBI" id="CHEBI:15378"/>
        <dbReference type="ChEBI" id="CHEBI:29985"/>
        <dbReference type="ChEBI" id="CHEBI:44337"/>
        <dbReference type="ChEBI" id="CHEBI:57287"/>
        <dbReference type="ChEBI" id="CHEBI:57288"/>
        <dbReference type="EC" id="2.3.1.1"/>
    </reaction>
</comment>
<comment type="pathway">
    <text evidence="1">Amino-acid biosynthesis; L-arginine biosynthesis; L-ornithine and N-acetyl-L-glutamate from L-glutamate and N(2)-acetyl-L-ornithine (cyclic): step 1/1.</text>
</comment>
<comment type="pathway">
    <text evidence="1">Amino-acid biosynthesis; L-arginine biosynthesis; N(2)-acetyl-L-ornithine from L-glutamate: step 1/4.</text>
</comment>
<comment type="subunit">
    <text evidence="1">Heterotetramer of two alpha and two beta chains.</text>
</comment>
<comment type="subcellular location">
    <subcellularLocation>
        <location evidence="1">Cytoplasm</location>
    </subcellularLocation>
</comment>
<comment type="similarity">
    <text evidence="1">Belongs to the ArgJ family.</text>
</comment>
<organism>
    <name type="scientific">Thiobacillus denitrificans (strain ATCC 25259 / T1)</name>
    <dbReference type="NCBI Taxonomy" id="292415"/>
    <lineage>
        <taxon>Bacteria</taxon>
        <taxon>Pseudomonadati</taxon>
        <taxon>Pseudomonadota</taxon>
        <taxon>Betaproteobacteria</taxon>
        <taxon>Nitrosomonadales</taxon>
        <taxon>Thiobacillaceae</taxon>
        <taxon>Thiobacillus</taxon>
    </lineage>
</organism>
<feature type="chain" id="PRO_0000227272" description="Arginine biosynthesis bifunctional protein ArgJ alpha chain" evidence="1">
    <location>
        <begin position="1"/>
        <end position="191"/>
    </location>
</feature>
<feature type="chain" id="PRO_0000227273" description="Arginine biosynthesis bifunctional protein ArgJ beta chain" evidence="1">
    <location>
        <begin position="192"/>
        <end position="407"/>
    </location>
</feature>
<feature type="active site" description="Nucleophile" evidence="1">
    <location>
        <position position="192"/>
    </location>
</feature>
<feature type="binding site" evidence="1">
    <location>
        <position position="155"/>
    </location>
    <ligand>
        <name>substrate</name>
    </ligand>
</feature>
<feature type="binding site" evidence="1">
    <location>
        <position position="181"/>
    </location>
    <ligand>
        <name>substrate</name>
    </ligand>
</feature>
<feature type="binding site" evidence="1">
    <location>
        <position position="192"/>
    </location>
    <ligand>
        <name>substrate</name>
    </ligand>
</feature>
<feature type="binding site" evidence="1">
    <location>
        <position position="278"/>
    </location>
    <ligand>
        <name>substrate</name>
    </ligand>
</feature>
<feature type="binding site" evidence="1">
    <location>
        <position position="402"/>
    </location>
    <ligand>
        <name>substrate</name>
    </ligand>
</feature>
<feature type="binding site" evidence="1">
    <location>
        <position position="407"/>
    </location>
    <ligand>
        <name>substrate</name>
    </ligand>
</feature>
<feature type="site" description="Involved in the stabilization of negative charge on the oxyanion by the formation of the oxyanion hole" evidence="1">
    <location>
        <position position="118"/>
    </location>
</feature>
<feature type="site" description="Involved in the stabilization of negative charge on the oxyanion by the formation of the oxyanion hole" evidence="1">
    <location>
        <position position="119"/>
    </location>
</feature>
<feature type="site" description="Cleavage; by autolysis" evidence="1">
    <location>
        <begin position="191"/>
        <end position="192"/>
    </location>
</feature>
<proteinExistence type="inferred from homology"/>
<name>ARGJ_THIDA</name>
<gene>
    <name evidence="1" type="primary">argJ</name>
    <name type="ordered locus">Tbd_0029</name>
</gene>
<keyword id="KW-0012">Acyltransferase</keyword>
<keyword id="KW-0028">Amino-acid biosynthesis</keyword>
<keyword id="KW-0055">Arginine biosynthesis</keyword>
<keyword id="KW-0068">Autocatalytic cleavage</keyword>
<keyword id="KW-0963">Cytoplasm</keyword>
<keyword id="KW-0511">Multifunctional enzyme</keyword>
<keyword id="KW-1185">Reference proteome</keyword>
<keyword id="KW-0808">Transferase</keyword>
<dbReference type="EC" id="2.3.1.35" evidence="1"/>
<dbReference type="EC" id="2.3.1.1" evidence="1"/>
<dbReference type="EMBL" id="CP000116">
    <property type="protein sequence ID" value="AAZ95982.1"/>
    <property type="molecule type" value="Genomic_DNA"/>
</dbReference>
<dbReference type="RefSeq" id="WP_011310542.1">
    <property type="nucleotide sequence ID" value="NC_007404.1"/>
</dbReference>
<dbReference type="SMR" id="Q3SMQ9"/>
<dbReference type="STRING" id="292415.Tbd_0029"/>
<dbReference type="MEROPS" id="T05.001"/>
<dbReference type="KEGG" id="tbd:Tbd_0029"/>
<dbReference type="eggNOG" id="COG1364">
    <property type="taxonomic scope" value="Bacteria"/>
</dbReference>
<dbReference type="HOGENOM" id="CLU_027172_1_0_4"/>
<dbReference type="OrthoDB" id="9804242at2"/>
<dbReference type="UniPathway" id="UPA00068">
    <property type="reaction ID" value="UER00106"/>
</dbReference>
<dbReference type="UniPathway" id="UPA00068">
    <property type="reaction ID" value="UER00111"/>
</dbReference>
<dbReference type="Proteomes" id="UP000008291">
    <property type="component" value="Chromosome"/>
</dbReference>
<dbReference type="GO" id="GO:0005737">
    <property type="term" value="C:cytoplasm"/>
    <property type="evidence" value="ECO:0007669"/>
    <property type="project" value="UniProtKB-SubCell"/>
</dbReference>
<dbReference type="GO" id="GO:0004358">
    <property type="term" value="F:glutamate N-acetyltransferase activity"/>
    <property type="evidence" value="ECO:0007669"/>
    <property type="project" value="UniProtKB-UniRule"/>
</dbReference>
<dbReference type="GO" id="GO:0004042">
    <property type="term" value="F:L-glutamate N-acetyltransferase activity"/>
    <property type="evidence" value="ECO:0007669"/>
    <property type="project" value="UniProtKB-UniRule"/>
</dbReference>
<dbReference type="GO" id="GO:0006526">
    <property type="term" value="P:L-arginine biosynthetic process"/>
    <property type="evidence" value="ECO:0007669"/>
    <property type="project" value="UniProtKB-UniRule"/>
</dbReference>
<dbReference type="GO" id="GO:0006592">
    <property type="term" value="P:ornithine biosynthetic process"/>
    <property type="evidence" value="ECO:0007669"/>
    <property type="project" value="TreeGrafter"/>
</dbReference>
<dbReference type="CDD" id="cd02152">
    <property type="entry name" value="OAT"/>
    <property type="match status" value="1"/>
</dbReference>
<dbReference type="FunFam" id="3.10.20.340:FF:000001">
    <property type="entry name" value="Arginine biosynthesis bifunctional protein ArgJ, chloroplastic"/>
    <property type="match status" value="1"/>
</dbReference>
<dbReference type="FunFam" id="3.60.70.12:FF:000001">
    <property type="entry name" value="Arginine biosynthesis bifunctional protein ArgJ, chloroplastic"/>
    <property type="match status" value="1"/>
</dbReference>
<dbReference type="Gene3D" id="3.10.20.340">
    <property type="entry name" value="ArgJ beta chain, C-terminal domain"/>
    <property type="match status" value="1"/>
</dbReference>
<dbReference type="Gene3D" id="3.60.70.12">
    <property type="entry name" value="L-amino peptidase D-ALA esterase/amidase"/>
    <property type="match status" value="1"/>
</dbReference>
<dbReference type="HAMAP" id="MF_01106">
    <property type="entry name" value="ArgJ"/>
    <property type="match status" value="1"/>
</dbReference>
<dbReference type="InterPro" id="IPR002813">
    <property type="entry name" value="Arg_biosynth_ArgJ"/>
</dbReference>
<dbReference type="InterPro" id="IPR016117">
    <property type="entry name" value="ArgJ-like_dom_sf"/>
</dbReference>
<dbReference type="InterPro" id="IPR042195">
    <property type="entry name" value="ArgJ_beta_C"/>
</dbReference>
<dbReference type="NCBIfam" id="TIGR00120">
    <property type="entry name" value="ArgJ"/>
    <property type="match status" value="1"/>
</dbReference>
<dbReference type="NCBIfam" id="NF003802">
    <property type="entry name" value="PRK05388.1"/>
    <property type="match status" value="1"/>
</dbReference>
<dbReference type="PANTHER" id="PTHR23100">
    <property type="entry name" value="ARGININE BIOSYNTHESIS BIFUNCTIONAL PROTEIN ARGJ"/>
    <property type="match status" value="1"/>
</dbReference>
<dbReference type="PANTHER" id="PTHR23100:SF0">
    <property type="entry name" value="ARGININE BIOSYNTHESIS BIFUNCTIONAL PROTEIN ARGJ, MITOCHONDRIAL"/>
    <property type="match status" value="1"/>
</dbReference>
<dbReference type="Pfam" id="PF01960">
    <property type="entry name" value="ArgJ"/>
    <property type="match status" value="1"/>
</dbReference>
<dbReference type="SUPFAM" id="SSF56266">
    <property type="entry name" value="DmpA/ArgJ-like"/>
    <property type="match status" value="1"/>
</dbReference>
<accession>Q3SMQ9</accession>